<feature type="chain" id="PRO_0000200930" description="Uncharacterized protein y4oT">
    <location>
        <begin position="1"/>
        <end position="196"/>
    </location>
</feature>
<organism>
    <name type="scientific">Sinorhizobium fredii (strain NBRC 101917 / NGR234)</name>
    <dbReference type="NCBI Taxonomy" id="394"/>
    <lineage>
        <taxon>Bacteria</taxon>
        <taxon>Pseudomonadati</taxon>
        <taxon>Pseudomonadota</taxon>
        <taxon>Alphaproteobacteria</taxon>
        <taxon>Hyphomicrobiales</taxon>
        <taxon>Rhizobiaceae</taxon>
        <taxon>Sinorhizobium/Ensifer group</taxon>
        <taxon>Sinorhizobium</taxon>
    </lineage>
</organism>
<name>Y4OT_SINFN</name>
<proteinExistence type="predicted"/>
<reference key="1">
    <citation type="journal article" date="1997" name="Nature">
        <title>Molecular basis of symbiosis between Rhizobium and legumes.</title>
        <authorList>
            <person name="Freiberg C.A."/>
            <person name="Fellay R."/>
            <person name="Bairoch A."/>
            <person name="Broughton W.J."/>
            <person name="Rosenthal A."/>
            <person name="Perret X."/>
        </authorList>
    </citation>
    <scope>NUCLEOTIDE SEQUENCE [LARGE SCALE GENOMIC DNA]</scope>
    <source>
        <strain>NBRC 101917 / NGR234</strain>
    </source>
</reference>
<reference key="2">
    <citation type="journal article" date="2009" name="Appl. Environ. Microbiol.">
        <title>Rhizobium sp. strain NGR234 possesses a remarkable number of secretion systems.</title>
        <authorList>
            <person name="Schmeisser C."/>
            <person name="Liesegang H."/>
            <person name="Krysciak D."/>
            <person name="Bakkou N."/>
            <person name="Le Quere A."/>
            <person name="Wollherr A."/>
            <person name="Heinemeyer I."/>
            <person name="Morgenstern B."/>
            <person name="Pommerening-Roeser A."/>
            <person name="Flores M."/>
            <person name="Palacios R."/>
            <person name="Brenner S."/>
            <person name="Gottschalk G."/>
            <person name="Schmitz R.A."/>
            <person name="Broughton W.J."/>
            <person name="Perret X."/>
            <person name="Strittmatter A.W."/>
            <person name="Streit W.R."/>
        </authorList>
    </citation>
    <scope>NUCLEOTIDE SEQUENCE [LARGE SCALE GENOMIC DNA]</scope>
    <source>
        <strain>NBRC 101917 / NGR234</strain>
    </source>
</reference>
<accession>P55605</accession>
<sequence length="196" mass="20619">MHSPSTLPSIPIVTDLAALPGDHLQSVTLCCPSCEGLGGSAYDSLVLLPIHDANERLLSELRKGVLSESQVFAGVFALDPFRRHVDILKALETAGCHRVVNFPSVTAIDGEMRASLEDFGYGVTAEMNLLRTAIAKGFSTLAVVDSFGMAQEAVAIGVSGLIAARHANDAMLAEFSELAHETSLGLFRLPDAVGGT</sequence>
<geneLocation type="plasmid">
    <name>sym pNGR234a</name>
</geneLocation>
<keyword id="KW-0614">Plasmid</keyword>
<keyword id="KW-1185">Reference proteome</keyword>
<protein>
    <recommendedName>
        <fullName>Uncharacterized protein y4oT</fullName>
    </recommendedName>
</protein>
<dbReference type="EMBL" id="U00090">
    <property type="protein sequence ID" value="AAB91806.1"/>
    <property type="molecule type" value="Genomic_DNA"/>
</dbReference>
<dbReference type="RefSeq" id="NP_444009.1">
    <property type="nucleotide sequence ID" value="NC_000914.2"/>
</dbReference>
<dbReference type="RefSeq" id="WP_010875243.1">
    <property type="nucleotide sequence ID" value="NC_000914.2"/>
</dbReference>
<dbReference type="SMR" id="P55605"/>
<dbReference type="KEGG" id="rhi:NGR_a02160"/>
<dbReference type="PATRIC" id="fig|394.7.peg.227"/>
<dbReference type="eggNOG" id="COG5564">
    <property type="taxonomic scope" value="Bacteria"/>
</dbReference>
<dbReference type="HOGENOM" id="CLU_1389252_0_0_5"/>
<dbReference type="OrthoDB" id="8382122at2"/>
<dbReference type="Proteomes" id="UP000001054">
    <property type="component" value="Plasmid pNGR234a"/>
</dbReference>
<dbReference type="GO" id="GO:0003824">
    <property type="term" value="F:catalytic activity"/>
    <property type="evidence" value="ECO:0007669"/>
    <property type="project" value="InterPro"/>
</dbReference>
<dbReference type="Gene3D" id="3.20.20.70">
    <property type="entry name" value="Aldolase class I"/>
    <property type="match status" value="1"/>
</dbReference>
<dbReference type="InterPro" id="IPR013785">
    <property type="entry name" value="Aldolase_TIM"/>
</dbReference>
<dbReference type="InterPro" id="IPR015813">
    <property type="entry name" value="Pyrv/PenolPyrv_kinase-like_dom"/>
</dbReference>
<dbReference type="InterPro" id="IPR009215">
    <property type="entry name" value="TIM-br_IGPS-like"/>
</dbReference>
<dbReference type="InterPro" id="IPR051353">
    <property type="entry name" value="Tobamovirus_resist_UPF0261"/>
</dbReference>
<dbReference type="PANTHER" id="PTHR31862">
    <property type="entry name" value="UPF0261 DOMAIN PROTEIN (AFU_ORTHOLOGUE AFUA_1G10120)"/>
    <property type="match status" value="1"/>
</dbReference>
<dbReference type="PANTHER" id="PTHR31862:SF1">
    <property type="entry name" value="UPF0261 DOMAIN PROTEIN (AFU_ORTHOLOGUE AFUA_1G10120)"/>
    <property type="match status" value="1"/>
</dbReference>
<dbReference type="Pfam" id="PF09370">
    <property type="entry name" value="PEP_hydrolase"/>
    <property type="match status" value="1"/>
</dbReference>
<dbReference type="SUPFAM" id="SSF51621">
    <property type="entry name" value="Phosphoenolpyruvate/pyruvate domain"/>
    <property type="match status" value="1"/>
</dbReference>
<gene>
    <name type="ordered locus">NGR_a02160</name>
    <name type="ORF">y4oT</name>
</gene>